<protein>
    <recommendedName>
        <fullName evidence="1">Uracil-DNA glycosylase 1</fullName>
        <shortName evidence="1">UDG 1</shortName>
        <ecNumber evidence="1">3.2.2.27</ecNumber>
    </recommendedName>
</protein>
<gene>
    <name evidence="1" type="primary">ung1</name>
    <name type="ordered locus">lin0408</name>
</gene>
<name>UNG1_LISIN</name>
<comment type="function">
    <text evidence="1">Excises uracil residues from the DNA which can arise as a result of misincorporation of dUMP residues by DNA polymerase or due to deamination of cytosine.</text>
</comment>
<comment type="catalytic activity">
    <reaction evidence="1">
        <text>Hydrolyzes single-stranded DNA or mismatched double-stranded DNA and polynucleotides, releasing free uracil.</text>
        <dbReference type="EC" id="3.2.2.27"/>
    </reaction>
</comment>
<comment type="subcellular location">
    <subcellularLocation>
        <location evidence="1">Cytoplasm</location>
    </subcellularLocation>
</comment>
<comment type="similarity">
    <text evidence="1">Belongs to the uracil-DNA glycosylase (UDG) superfamily. UNG family.</text>
</comment>
<proteinExistence type="inferred from homology"/>
<organism>
    <name type="scientific">Listeria innocua serovar 6a (strain ATCC BAA-680 / CLIP 11262)</name>
    <dbReference type="NCBI Taxonomy" id="272626"/>
    <lineage>
        <taxon>Bacteria</taxon>
        <taxon>Bacillati</taxon>
        <taxon>Bacillota</taxon>
        <taxon>Bacilli</taxon>
        <taxon>Bacillales</taxon>
        <taxon>Listeriaceae</taxon>
        <taxon>Listeria</taxon>
    </lineage>
</organism>
<reference key="1">
    <citation type="journal article" date="2001" name="Science">
        <title>Comparative genomics of Listeria species.</title>
        <authorList>
            <person name="Glaser P."/>
            <person name="Frangeul L."/>
            <person name="Buchrieser C."/>
            <person name="Rusniok C."/>
            <person name="Amend A."/>
            <person name="Baquero F."/>
            <person name="Berche P."/>
            <person name="Bloecker H."/>
            <person name="Brandt P."/>
            <person name="Chakraborty T."/>
            <person name="Charbit A."/>
            <person name="Chetouani F."/>
            <person name="Couve E."/>
            <person name="de Daruvar A."/>
            <person name="Dehoux P."/>
            <person name="Domann E."/>
            <person name="Dominguez-Bernal G."/>
            <person name="Duchaud E."/>
            <person name="Durant L."/>
            <person name="Dussurget O."/>
            <person name="Entian K.-D."/>
            <person name="Fsihi H."/>
            <person name="Garcia-del Portillo F."/>
            <person name="Garrido P."/>
            <person name="Gautier L."/>
            <person name="Goebel W."/>
            <person name="Gomez-Lopez N."/>
            <person name="Hain T."/>
            <person name="Hauf J."/>
            <person name="Jackson D."/>
            <person name="Jones L.-M."/>
            <person name="Kaerst U."/>
            <person name="Kreft J."/>
            <person name="Kuhn M."/>
            <person name="Kunst F."/>
            <person name="Kurapkat G."/>
            <person name="Madueno E."/>
            <person name="Maitournam A."/>
            <person name="Mata Vicente J."/>
            <person name="Ng E."/>
            <person name="Nedjari H."/>
            <person name="Nordsiek G."/>
            <person name="Novella S."/>
            <person name="de Pablos B."/>
            <person name="Perez-Diaz J.-C."/>
            <person name="Purcell R."/>
            <person name="Remmel B."/>
            <person name="Rose M."/>
            <person name="Schlueter T."/>
            <person name="Simoes N."/>
            <person name="Tierrez A."/>
            <person name="Vazquez-Boland J.-A."/>
            <person name="Voss H."/>
            <person name="Wehland J."/>
            <person name="Cossart P."/>
        </authorList>
    </citation>
    <scope>NUCLEOTIDE SEQUENCE [LARGE SCALE GENOMIC DNA]</scope>
    <source>
        <strain>ATCC BAA-680 / CLIP 11262</strain>
    </source>
</reference>
<accession>Q92EQ0</accession>
<keyword id="KW-0963">Cytoplasm</keyword>
<keyword id="KW-0227">DNA damage</keyword>
<keyword id="KW-0234">DNA repair</keyword>
<keyword id="KW-0378">Hydrolase</keyword>
<feature type="chain" id="PRO_0000176109" description="Uracil-DNA glycosylase 1">
    <location>
        <begin position="1"/>
        <end position="221"/>
    </location>
</feature>
<feature type="active site" description="Proton acceptor" evidence="1">
    <location>
        <position position="61"/>
    </location>
</feature>
<dbReference type="EC" id="3.2.2.27" evidence="1"/>
<dbReference type="EMBL" id="AL596164">
    <property type="protein sequence ID" value="CAC95641.1"/>
    <property type="molecule type" value="Genomic_DNA"/>
</dbReference>
<dbReference type="PIR" id="AI1483">
    <property type="entry name" value="AI1483"/>
</dbReference>
<dbReference type="RefSeq" id="WP_010990390.1">
    <property type="nucleotide sequence ID" value="NC_003212.1"/>
</dbReference>
<dbReference type="SMR" id="Q92EQ0"/>
<dbReference type="STRING" id="272626.gene:17564735"/>
<dbReference type="KEGG" id="lin:lin0408"/>
<dbReference type="eggNOG" id="COG0692">
    <property type="taxonomic scope" value="Bacteria"/>
</dbReference>
<dbReference type="HOGENOM" id="CLU_032162_3_1_9"/>
<dbReference type="OrthoDB" id="9804372at2"/>
<dbReference type="Proteomes" id="UP000002513">
    <property type="component" value="Chromosome"/>
</dbReference>
<dbReference type="GO" id="GO:0005737">
    <property type="term" value="C:cytoplasm"/>
    <property type="evidence" value="ECO:0007669"/>
    <property type="project" value="UniProtKB-SubCell"/>
</dbReference>
<dbReference type="GO" id="GO:0004844">
    <property type="term" value="F:uracil DNA N-glycosylase activity"/>
    <property type="evidence" value="ECO:0007669"/>
    <property type="project" value="UniProtKB-UniRule"/>
</dbReference>
<dbReference type="GO" id="GO:0097510">
    <property type="term" value="P:base-excision repair, AP site formation via deaminated base removal"/>
    <property type="evidence" value="ECO:0007669"/>
    <property type="project" value="TreeGrafter"/>
</dbReference>
<dbReference type="CDD" id="cd10027">
    <property type="entry name" value="UDG-F1-like"/>
    <property type="match status" value="1"/>
</dbReference>
<dbReference type="FunFam" id="3.40.470.10:FF:000001">
    <property type="entry name" value="Uracil-DNA glycosylase"/>
    <property type="match status" value="1"/>
</dbReference>
<dbReference type="Gene3D" id="3.40.470.10">
    <property type="entry name" value="Uracil-DNA glycosylase-like domain"/>
    <property type="match status" value="1"/>
</dbReference>
<dbReference type="HAMAP" id="MF_00148">
    <property type="entry name" value="UDG"/>
    <property type="match status" value="1"/>
</dbReference>
<dbReference type="InterPro" id="IPR002043">
    <property type="entry name" value="UDG_fam1"/>
</dbReference>
<dbReference type="InterPro" id="IPR018085">
    <property type="entry name" value="Ura-DNA_Glyclase_AS"/>
</dbReference>
<dbReference type="InterPro" id="IPR005122">
    <property type="entry name" value="Uracil-DNA_glycosylase-like"/>
</dbReference>
<dbReference type="InterPro" id="IPR036895">
    <property type="entry name" value="Uracil-DNA_glycosylase-like_sf"/>
</dbReference>
<dbReference type="NCBIfam" id="NF003588">
    <property type="entry name" value="PRK05254.1-1"/>
    <property type="match status" value="1"/>
</dbReference>
<dbReference type="NCBIfam" id="NF003589">
    <property type="entry name" value="PRK05254.1-2"/>
    <property type="match status" value="1"/>
</dbReference>
<dbReference type="NCBIfam" id="NF003591">
    <property type="entry name" value="PRK05254.1-4"/>
    <property type="match status" value="1"/>
</dbReference>
<dbReference type="NCBIfam" id="NF003592">
    <property type="entry name" value="PRK05254.1-5"/>
    <property type="match status" value="1"/>
</dbReference>
<dbReference type="NCBIfam" id="TIGR00628">
    <property type="entry name" value="ung"/>
    <property type="match status" value="1"/>
</dbReference>
<dbReference type="PANTHER" id="PTHR11264">
    <property type="entry name" value="URACIL-DNA GLYCOSYLASE"/>
    <property type="match status" value="1"/>
</dbReference>
<dbReference type="PANTHER" id="PTHR11264:SF0">
    <property type="entry name" value="URACIL-DNA GLYCOSYLASE"/>
    <property type="match status" value="1"/>
</dbReference>
<dbReference type="Pfam" id="PF03167">
    <property type="entry name" value="UDG"/>
    <property type="match status" value="1"/>
</dbReference>
<dbReference type="SMART" id="SM00986">
    <property type="entry name" value="UDG"/>
    <property type="match status" value="1"/>
</dbReference>
<dbReference type="SMART" id="SM00987">
    <property type="entry name" value="UreE_C"/>
    <property type="match status" value="1"/>
</dbReference>
<dbReference type="SUPFAM" id="SSF52141">
    <property type="entry name" value="Uracil-DNA glycosylase-like"/>
    <property type="match status" value="1"/>
</dbReference>
<dbReference type="PROSITE" id="PS00130">
    <property type="entry name" value="U_DNA_GLYCOSYLASE"/>
    <property type="match status" value="1"/>
</dbReference>
<evidence type="ECO:0000255" key="1">
    <source>
        <dbReference type="HAMAP-Rule" id="MF_00148"/>
    </source>
</evidence>
<sequence length="221" mass="25047">MVKTWDEFLEQEAKQPYFIELMKAVSEAREEGNVYPSEEDMFSCFRLCPYDKVKVVILGQDPYHGPGQAHGLSFSVQKDVRIPPSLRNIYKELKSDLDIDPANHGYLAKWAEQGVLLMNTSWSVEEGKAGSHKKLGWATFTDHVLEELNNYDKPLVFILWGNHAIKAASGITNPKHLLIKGVHPSPLAASRGFFGSKPFSKTNEFLKENNRTPIDWDLNSK</sequence>